<evidence type="ECO:0000250" key="1"/>
<evidence type="ECO:0000305" key="2"/>
<reference key="1">
    <citation type="journal article" date="2002" name="DNA Res.">
        <title>Complete genomic sequence of nitrogen-fixing symbiotic bacterium Bradyrhizobium japonicum USDA110.</title>
        <authorList>
            <person name="Kaneko T."/>
            <person name="Nakamura Y."/>
            <person name="Sato S."/>
            <person name="Minamisawa K."/>
            <person name="Uchiumi T."/>
            <person name="Sasamoto S."/>
            <person name="Watanabe A."/>
            <person name="Idesawa K."/>
            <person name="Iriguchi M."/>
            <person name="Kawashima K."/>
            <person name="Kohara M."/>
            <person name="Matsumoto M."/>
            <person name="Shimpo S."/>
            <person name="Tsuruoka H."/>
            <person name="Wada T."/>
            <person name="Yamada M."/>
            <person name="Tabata S."/>
        </authorList>
    </citation>
    <scope>NUCLEOTIDE SEQUENCE [LARGE SCALE GENOMIC DNA]</scope>
    <source>
        <strain>JCM 10833 / BCRC 13528 / IAM 13628 / NBRC 14792 / USDA 110</strain>
    </source>
</reference>
<feature type="chain" id="PRO_0000136350" description="Phosphoribosyl-ATP pyrophosphatase 1">
    <location>
        <begin position="1"/>
        <end position="106"/>
    </location>
</feature>
<name>HIS21_BRADU</name>
<accession>Q89WM3</accession>
<gene>
    <name type="primary">hisE1</name>
    <name type="ordered locus">blr0655</name>
</gene>
<proteinExistence type="inferred from homology"/>
<keyword id="KW-0028">Amino-acid biosynthesis</keyword>
<keyword id="KW-0067">ATP-binding</keyword>
<keyword id="KW-0963">Cytoplasm</keyword>
<keyword id="KW-0368">Histidine biosynthesis</keyword>
<keyword id="KW-0378">Hydrolase</keyword>
<keyword id="KW-0547">Nucleotide-binding</keyword>
<keyword id="KW-1185">Reference proteome</keyword>
<sequence length="106" mass="11536">MPRFTIHDLAETIDARAAAGGEGSYTRKLLDKGAEHCAKKFGEEAVETVIAAVENDRAHLIAEGADLLYHFLVLLKARGIKLEEVEAALGKRTSMSGLEEKASRKE</sequence>
<protein>
    <recommendedName>
        <fullName>Phosphoribosyl-ATP pyrophosphatase 1</fullName>
        <shortName>PRA-PH 1</shortName>
        <ecNumber>3.6.1.31</ecNumber>
    </recommendedName>
</protein>
<dbReference type="EC" id="3.6.1.31"/>
<dbReference type="EMBL" id="BA000040">
    <property type="protein sequence ID" value="BAC45920.1"/>
    <property type="molecule type" value="Genomic_DNA"/>
</dbReference>
<dbReference type="RefSeq" id="NP_767295.1">
    <property type="nucleotide sequence ID" value="NC_004463.1"/>
</dbReference>
<dbReference type="RefSeq" id="WP_011083482.1">
    <property type="nucleotide sequence ID" value="NZ_CP011360.1"/>
</dbReference>
<dbReference type="SMR" id="Q89WM3"/>
<dbReference type="STRING" id="224911.AAV28_00110"/>
<dbReference type="EnsemblBacteria" id="BAC45920">
    <property type="protein sequence ID" value="BAC45920"/>
    <property type="gene ID" value="BAC45920"/>
</dbReference>
<dbReference type="KEGG" id="bja:blr0655"/>
<dbReference type="PATRIC" id="fig|224911.44.peg.24"/>
<dbReference type="eggNOG" id="COG0140">
    <property type="taxonomic scope" value="Bacteria"/>
</dbReference>
<dbReference type="HOGENOM" id="CLU_123337_1_1_5"/>
<dbReference type="InParanoid" id="Q89WM3"/>
<dbReference type="OrthoDB" id="9814738at2"/>
<dbReference type="PhylomeDB" id="Q89WM3"/>
<dbReference type="UniPathway" id="UPA00031">
    <property type="reaction ID" value="UER00007"/>
</dbReference>
<dbReference type="Proteomes" id="UP000002526">
    <property type="component" value="Chromosome"/>
</dbReference>
<dbReference type="GO" id="GO:0005737">
    <property type="term" value="C:cytoplasm"/>
    <property type="evidence" value="ECO:0007669"/>
    <property type="project" value="UniProtKB-SubCell"/>
</dbReference>
<dbReference type="GO" id="GO:0005524">
    <property type="term" value="F:ATP binding"/>
    <property type="evidence" value="ECO:0007669"/>
    <property type="project" value="UniProtKB-KW"/>
</dbReference>
<dbReference type="GO" id="GO:0004636">
    <property type="term" value="F:phosphoribosyl-ATP diphosphatase activity"/>
    <property type="evidence" value="ECO:0007669"/>
    <property type="project" value="UniProtKB-UniRule"/>
</dbReference>
<dbReference type="GO" id="GO:0000105">
    <property type="term" value="P:L-histidine biosynthetic process"/>
    <property type="evidence" value="ECO:0007669"/>
    <property type="project" value="UniProtKB-UniRule"/>
</dbReference>
<dbReference type="CDD" id="cd11534">
    <property type="entry name" value="NTP-PPase_HisIE_like"/>
    <property type="match status" value="1"/>
</dbReference>
<dbReference type="Gene3D" id="1.10.287.1080">
    <property type="entry name" value="MazG-like"/>
    <property type="match status" value="1"/>
</dbReference>
<dbReference type="HAMAP" id="MF_01020">
    <property type="entry name" value="HisE"/>
    <property type="match status" value="1"/>
</dbReference>
<dbReference type="InterPro" id="IPR008179">
    <property type="entry name" value="HisE"/>
</dbReference>
<dbReference type="InterPro" id="IPR021130">
    <property type="entry name" value="PRib-ATP_PPHydrolase-like"/>
</dbReference>
<dbReference type="NCBIfam" id="TIGR03188">
    <property type="entry name" value="histidine_hisI"/>
    <property type="match status" value="1"/>
</dbReference>
<dbReference type="NCBIfam" id="NF001613">
    <property type="entry name" value="PRK00400.1-5"/>
    <property type="match status" value="1"/>
</dbReference>
<dbReference type="PANTHER" id="PTHR42945">
    <property type="entry name" value="HISTIDINE BIOSYNTHESIS BIFUNCTIONAL PROTEIN"/>
    <property type="match status" value="1"/>
</dbReference>
<dbReference type="PANTHER" id="PTHR42945:SF1">
    <property type="entry name" value="HISTIDINE BIOSYNTHESIS BIFUNCTIONAL PROTEIN HIS7"/>
    <property type="match status" value="1"/>
</dbReference>
<dbReference type="Pfam" id="PF01503">
    <property type="entry name" value="PRA-PH"/>
    <property type="match status" value="1"/>
</dbReference>
<dbReference type="SUPFAM" id="SSF101386">
    <property type="entry name" value="all-alpha NTP pyrophosphatases"/>
    <property type="match status" value="1"/>
</dbReference>
<organism>
    <name type="scientific">Bradyrhizobium diazoefficiens (strain JCM 10833 / BCRC 13528 / IAM 13628 / NBRC 14792 / USDA 110)</name>
    <dbReference type="NCBI Taxonomy" id="224911"/>
    <lineage>
        <taxon>Bacteria</taxon>
        <taxon>Pseudomonadati</taxon>
        <taxon>Pseudomonadota</taxon>
        <taxon>Alphaproteobacteria</taxon>
        <taxon>Hyphomicrobiales</taxon>
        <taxon>Nitrobacteraceae</taxon>
        <taxon>Bradyrhizobium</taxon>
    </lineage>
</organism>
<comment type="catalytic activity">
    <reaction>
        <text>1-(5-phospho-beta-D-ribosyl)-ATP + H2O = 1-(5-phospho-beta-D-ribosyl)-5'-AMP + diphosphate + H(+)</text>
        <dbReference type="Rhea" id="RHEA:22828"/>
        <dbReference type="ChEBI" id="CHEBI:15377"/>
        <dbReference type="ChEBI" id="CHEBI:15378"/>
        <dbReference type="ChEBI" id="CHEBI:33019"/>
        <dbReference type="ChEBI" id="CHEBI:59457"/>
        <dbReference type="ChEBI" id="CHEBI:73183"/>
        <dbReference type="EC" id="3.6.1.31"/>
    </reaction>
</comment>
<comment type="pathway">
    <text>Amino-acid biosynthesis; L-histidine biosynthesis; L-histidine from 5-phospho-alpha-D-ribose 1-diphosphate: step 2/9.</text>
</comment>
<comment type="subcellular location">
    <subcellularLocation>
        <location evidence="1">Cytoplasm</location>
    </subcellularLocation>
</comment>
<comment type="similarity">
    <text evidence="2">Belongs to the PRA-PH family.</text>
</comment>